<keyword id="KW-0002">3D-structure</keyword>
<keyword id="KW-1185">Reference proteome</keyword>
<keyword id="KW-0687">Ribonucleoprotein</keyword>
<keyword id="KW-0689">Ribosomal protein</keyword>
<sequence length="104" mass="12000">MVNIPKTRNTFCKKCKGYSAHKVSQAKKSKDNPRAQGNRRYARKQRGYGGQTKPILRRKAKVTKKLVLNLECTKCKFSHQKPLKRAKHVIFGGERKRKGEALVY</sequence>
<organism>
    <name type="scientific">Encephalitozoon cuniculi (strain GB-M1)</name>
    <name type="common">Microsporidian parasite</name>
    <dbReference type="NCBI Taxonomy" id="284813"/>
    <lineage>
        <taxon>Eukaryota</taxon>
        <taxon>Fungi</taxon>
        <taxon>Fungi incertae sedis</taxon>
        <taxon>Microsporidia</taxon>
        <taxon>Unikaryonidae</taxon>
        <taxon>Encephalitozoon</taxon>
    </lineage>
</organism>
<gene>
    <name type="primary">RPL44</name>
    <name type="ordered locus">ECU10_1300</name>
</gene>
<evidence type="ECO:0000256" key="1">
    <source>
        <dbReference type="SAM" id="MobiDB-lite"/>
    </source>
</evidence>
<evidence type="ECO:0000305" key="2"/>
<reference key="1">
    <citation type="journal article" date="2001" name="Nature">
        <title>Genome sequence and gene compaction of the eukaryote parasite Encephalitozoon cuniculi.</title>
        <authorList>
            <person name="Katinka M.D."/>
            <person name="Duprat S."/>
            <person name="Cornillot E."/>
            <person name="Metenier G."/>
            <person name="Thomarat F."/>
            <person name="Prensier G."/>
            <person name="Barbe V."/>
            <person name="Peyretaillade E."/>
            <person name="Brottier P."/>
            <person name="Wincker P."/>
            <person name="Delbac F."/>
            <person name="El Alaoui H."/>
            <person name="Peyret P."/>
            <person name="Saurin W."/>
            <person name="Gouy M."/>
            <person name="Weissenbach J."/>
            <person name="Vivares C.P."/>
        </authorList>
    </citation>
    <scope>NUCLEOTIDE SEQUENCE [LARGE SCALE GENOMIC DNA]</scope>
    <source>
        <strain>GB-M1</strain>
    </source>
</reference>
<accession>Q8SR18</accession>
<comment type="similarity">
    <text evidence="2">Belongs to the eukaryotic ribosomal protein eL42 family.</text>
</comment>
<feature type="chain" id="PRO_0000260175" description="Large ribosomal subunit protein eL42">
    <location>
        <begin position="1"/>
        <end position="104"/>
    </location>
</feature>
<feature type="region of interest" description="Disordered" evidence="1">
    <location>
        <begin position="22"/>
        <end position="56"/>
    </location>
</feature>
<proteinExistence type="evidence at protein level"/>
<protein>
    <recommendedName>
        <fullName evidence="2">Large ribosomal subunit protein eL42</fullName>
    </recommendedName>
    <alternativeName>
        <fullName>60S ribosomal protein L44</fullName>
    </alternativeName>
</protein>
<dbReference type="EMBL" id="AL590449">
    <property type="protein sequence ID" value="CAD25849.1"/>
    <property type="molecule type" value="Genomic_DNA"/>
</dbReference>
<dbReference type="RefSeq" id="NP_586245.1">
    <property type="nucleotide sequence ID" value="NM_001042078.1"/>
</dbReference>
<dbReference type="PDB" id="7QEP">
    <property type="method" value="EM"/>
    <property type="resolution" value="2.70 A"/>
    <property type="chains" value="P2=1-104"/>
</dbReference>
<dbReference type="PDBsum" id="7QEP"/>
<dbReference type="EMDB" id="EMD-13936"/>
<dbReference type="SMR" id="Q8SR18"/>
<dbReference type="FunCoup" id="Q8SR18">
    <property type="interactions" value="146"/>
</dbReference>
<dbReference type="STRING" id="284813.Q8SR18"/>
<dbReference type="GeneID" id="859895"/>
<dbReference type="KEGG" id="ecu:ECU10_1300"/>
<dbReference type="VEuPathDB" id="MicrosporidiaDB:ECU10_1300"/>
<dbReference type="HOGENOM" id="CLU_114645_2_1_1"/>
<dbReference type="InParanoid" id="Q8SR18"/>
<dbReference type="OMA" id="CKKHTIH"/>
<dbReference type="OrthoDB" id="2967263at2759"/>
<dbReference type="Proteomes" id="UP000000819">
    <property type="component" value="Chromosome X"/>
</dbReference>
<dbReference type="GO" id="GO:1990904">
    <property type="term" value="C:ribonucleoprotein complex"/>
    <property type="evidence" value="ECO:0007669"/>
    <property type="project" value="UniProtKB-KW"/>
</dbReference>
<dbReference type="GO" id="GO:0005840">
    <property type="term" value="C:ribosome"/>
    <property type="evidence" value="ECO:0007669"/>
    <property type="project" value="UniProtKB-KW"/>
</dbReference>
<dbReference type="GO" id="GO:0003735">
    <property type="term" value="F:structural constituent of ribosome"/>
    <property type="evidence" value="ECO:0007669"/>
    <property type="project" value="InterPro"/>
</dbReference>
<dbReference type="GO" id="GO:0006412">
    <property type="term" value="P:translation"/>
    <property type="evidence" value="ECO:0007669"/>
    <property type="project" value="InterPro"/>
</dbReference>
<dbReference type="FunFam" id="3.10.450.80:FF:000001">
    <property type="entry name" value="60S ribosomal protein L44"/>
    <property type="match status" value="1"/>
</dbReference>
<dbReference type="Gene3D" id="3.10.450.80">
    <property type="match status" value="1"/>
</dbReference>
<dbReference type="InterPro" id="IPR000552">
    <property type="entry name" value="Ribosomal_eL44"/>
</dbReference>
<dbReference type="InterPro" id="IPR053708">
    <property type="entry name" value="Ribosomal_LSU_eL42"/>
</dbReference>
<dbReference type="InterPro" id="IPR011332">
    <property type="entry name" value="Ribosomal_zn-bd"/>
</dbReference>
<dbReference type="PANTHER" id="PTHR10369">
    <property type="entry name" value="60S RIBOSOMAL PROTEIN L36A/L44"/>
    <property type="match status" value="1"/>
</dbReference>
<dbReference type="Pfam" id="PF00935">
    <property type="entry name" value="Ribosomal_L44"/>
    <property type="match status" value="1"/>
</dbReference>
<dbReference type="SUPFAM" id="SSF57829">
    <property type="entry name" value="Zn-binding ribosomal proteins"/>
    <property type="match status" value="1"/>
</dbReference>
<name>RL44_ENCCU</name>